<keyword id="KW-0145">Chemotaxis</keyword>
<keyword id="KW-0378">Hydrolase</keyword>
<keyword id="KW-1185">Reference proteome</keyword>
<evidence type="ECO:0000255" key="1">
    <source>
        <dbReference type="HAMAP-Rule" id="MF_01440"/>
    </source>
</evidence>
<protein>
    <recommendedName>
        <fullName evidence="1">Probable chemoreceptor glutamine deamidase CheD</fullName>
        <ecNumber evidence="1">3.5.1.44</ecNumber>
    </recommendedName>
</protein>
<organism>
    <name type="scientific">Cereibacter sphaeroides (strain ATCC 17023 / DSM 158 / JCM 6121 / CCUG 31486 / LMG 2827 / NBRC 12203 / NCIMB 8253 / ATH 2.4.1.)</name>
    <name type="common">Rhodobacter sphaeroides</name>
    <dbReference type="NCBI Taxonomy" id="272943"/>
    <lineage>
        <taxon>Bacteria</taxon>
        <taxon>Pseudomonadati</taxon>
        <taxon>Pseudomonadota</taxon>
        <taxon>Alphaproteobacteria</taxon>
        <taxon>Rhodobacterales</taxon>
        <taxon>Paracoccaceae</taxon>
        <taxon>Cereibacter</taxon>
    </lineage>
</organism>
<name>CHED_CERS4</name>
<reference key="1">
    <citation type="submission" date="2005-09" db="EMBL/GenBank/DDBJ databases">
        <title>Complete sequence of chromosome 1 of Rhodobacter sphaeroides 2.4.1.</title>
        <authorList>
            <person name="Copeland A."/>
            <person name="Lucas S."/>
            <person name="Lapidus A."/>
            <person name="Barry K."/>
            <person name="Detter J.C."/>
            <person name="Glavina T."/>
            <person name="Hammon N."/>
            <person name="Israni S."/>
            <person name="Pitluck S."/>
            <person name="Richardson P."/>
            <person name="Mackenzie C."/>
            <person name="Choudhary M."/>
            <person name="Larimer F."/>
            <person name="Hauser L.J."/>
            <person name="Land M."/>
            <person name="Donohue T.J."/>
            <person name="Kaplan S."/>
        </authorList>
    </citation>
    <scope>NUCLEOTIDE SEQUENCE [LARGE SCALE GENOMIC DNA]</scope>
    <source>
        <strain>ATCC 17023 / DSM 158 / JCM 6121 / CCUG 31486 / LMG 2827 / NBRC 12203 / NCIMB 8253 / ATH 2.4.1.</strain>
    </source>
</reference>
<comment type="function">
    <text evidence="1">Probably deamidates glutamine residues to glutamate on methyl-accepting chemotaxis receptors (MCPs), playing an important role in chemotaxis.</text>
</comment>
<comment type="catalytic activity">
    <reaction evidence="1">
        <text>L-glutaminyl-[protein] + H2O = L-glutamyl-[protein] + NH4(+)</text>
        <dbReference type="Rhea" id="RHEA:16441"/>
        <dbReference type="Rhea" id="RHEA-COMP:10207"/>
        <dbReference type="Rhea" id="RHEA-COMP:10208"/>
        <dbReference type="ChEBI" id="CHEBI:15377"/>
        <dbReference type="ChEBI" id="CHEBI:28938"/>
        <dbReference type="ChEBI" id="CHEBI:29973"/>
        <dbReference type="ChEBI" id="CHEBI:30011"/>
        <dbReference type="EC" id="3.5.1.44"/>
    </reaction>
</comment>
<comment type="similarity">
    <text evidence="1">Belongs to the CheD family.</text>
</comment>
<dbReference type="EC" id="3.5.1.44" evidence="1"/>
<dbReference type="EMBL" id="CP000143">
    <property type="protein sequence ID" value="ABA78600.1"/>
    <property type="molecule type" value="Genomic_DNA"/>
</dbReference>
<dbReference type="RefSeq" id="WP_011337491.1">
    <property type="nucleotide sequence ID" value="NC_007493.2"/>
</dbReference>
<dbReference type="RefSeq" id="YP_352501.1">
    <property type="nucleotide sequence ID" value="NC_007493.2"/>
</dbReference>
<dbReference type="SMR" id="Q3J3N4"/>
<dbReference type="STRING" id="272943.RSP_2439"/>
<dbReference type="EnsemblBacteria" id="ABA78600">
    <property type="protein sequence ID" value="ABA78600"/>
    <property type="gene ID" value="RSP_2439"/>
</dbReference>
<dbReference type="GeneID" id="3720036"/>
<dbReference type="KEGG" id="rsp:RSP_2439"/>
<dbReference type="PATRIC" id="fig|272943.9.peg.1358"/>
<dbReference type="eggNOG" id="COG1871">
    <property type="taxonomic scope" value="Bacteria"/>
</dbReference>
<dbReference type="OrthoDB" id="9807202at2"/>
<dbReference type="PhylomeDB" id="Q3J3N4"/>
<dbReference type="Proteomes" id="UP000002703">
    <property type="component" value="Chromosome 1"/>
</dbReference>
<dbReference type="GO" id="GO:0050568">
    <property type="term" value="F:protein-glutamine glutaminase activity"/>
    <property type="evidence" value="ECO:0007669"/>
    <property type="project" value="UniProtKB-UniRule"/>
</dbReference>
<dbReference type="GO" id="GO:0006935">
    <property type="term" value="P:chemotaxis"/>
    <property type="evidence" value="ECO:0007669"/>
    <property type="project" value="UniProtKB-UniRule"/>
</dbReference>
<dbReference type="CDD" id="cd16352">
    <property type="entry name" value="CheD"/>
    <property type="match status" value="1"/>
</dbReference>
<dbReference type="Gene3D" id="3.30.1330.200">
    <property type="match status" value="1"/>
</dbReference>
<dbReference type="HAMAP" id="MF_01440">
    <property type="entry name" value="CheD"/>
    <property type="match status" value="1"/>
</dbReference>
<dbReference type="InterPro" id="IPR038592">
    <property type="entry name" value="CheD-like_sf"/>
</dbReference>
<dbReference type="InterPro" id="IPR005659">
    <property type="entry name" value="Chemorcpt_Glu_NH3ase_CheD"/>
</dbReference>
<dbReference type="InterPro" id="IPR011324">
    <property type="entry name" value="Cytotoxic_necrot_fac-like_cat"/>
</dbReference>
<dbReference type="PANTHER" id="PTHR35147">
    <property type="entry name" value="CHEMORECEPTOR GLUTAMINE DEAMIDASE CHED-RELATED"/>
    <property type="match status" value="1"/>
</dbReference>
<dbReference type="PANTHER" id="PTHR35147:SF2">
    <property type="entry name" value="CHEMORECEPTOR GLUTAMINE DEAMIDASE CHED-RELATED"/>
    <property type="match status" value="1"/>
</dbReference>
<dbReference type="Pfam" id="PF03975">
    <property type="entry name" value="CheD"/>
    <property type="match status" value="1"/>
</dbReference>
<dbReference type="SUPFAM" id="SSF64438">
    <property type="entry name" value="CNF1/YfiH-like putative cysteine hydrolases"/>
    <property type="match status" value="1"/>
</dbReference>
<sequence>MTRCDDSPSASQISITHVTQGSCVASSSPNEVYATILGSCICTCMCDPVAGVGGMNHFLLPSADVEDAQHLRYGSHAMELLINALLKLGAARQRIEAKIFGGAMMTPQLGAIGQANAAFARRYLKDEGIRCTAHSLGGNRARRIRFWPKTGRVQQMFLGSEDVVPNEQPQFRLQGGAGDVTFFDRHNNAEMPDPIKEPR</sequence>
<proteinExistence type="inferred from homology"/>
<gene>
    <name evidence="1" type="primary">cheD</name>
    <name type="ordered locus">RHOS4_10320</name>
    <name type="ORF">RSP_2439</name>
</gene>
<accession>Q3J3N4</accession>
<feature type="chain" id="PRO_0000251059" description="Probable chemoreceptor glutamine deamidase CheD">
    <location>
        <begin position="1"/>
        <end position="199"/>
    </location>
</feature>